<name>QUEA_PARP8</name>
<gene>
    <name evidence="1" type="primary">queA</name>
    <name type="ordered locus">Bphy_2524</name>
</gene>
<proteinExistence type="inferred from homology"/>
<keyword id="KW-0963">Cytoplasm</keyword>
<keyword id="KW-0671">Queuosine biosynthesis</keyword>
<keyword id="KW-1185">Reference proteome</keyword>
<keyword id="KW-0949">S-adenosyl-L-methionine</keyword>
<keyword id="KW-0808">Transferase</keyword>
<dbReference type="EC" id="2.4.99.17" evidence="1"/>
<dbReference type="EMBL" id="CP001043">
    <property type="protein sequence ID" value="ACC71696.1"/>
    <property type="molecule type" value="Genomic_DNA"/>
</dbReference>
<dbReference type="RefSeq" id="WP_012401900.1">
    <property type="nucleotide sequence ID" value="NC_010622.1"/>
</dbReference>
<dbReference type="SMR" id="B2JGG8"/>
<dbReference type="STRING" id="391038.Bphy_2524"/>
<dbReference type="KEGG" id="bph:Bphy_2524"/>
<dbReference type="eggNOG" id="COG0809">
    <property type="taxonomic scope" value="Bacteria"/>
</dbReference>
<dbReference type="HOGENOM" id="CLU_039110_1_0_4"/>
<dbReference type="OrthoDB" id="9805933at2"/>
<dbReference type="UniPathway" id="UPA00392"/>
<dbReference type="Proteomes" id="UP000001192">
    <property type="component" value="Chromosome 1"/>
</dbReference>
<dbReference type="GO" id="GO:0005737">
    <property type="term" value="C:cytoplasm"/>
    <property type="evidence" value="ECO:0007669"/>
    <property type="project" value="UniProtKB-SubCell"/>
</dbReference>
<dbReference type="GO" id="GO:0051075">
    <property type="term" value="F:S-adenosylmethionine:tRNA ribosyltransferase-isomerase activity"/>
    <property type="evidence" value="ECO:0007669"/>
    <property type="project" value="UniProtKB-EC"/>
</dbReference>
<dbReference type="GO" id="GO:0008616">
    <property type="term" value="P:queuosine biosynthetic process"/>
    <property type="evidence" value="ECO:0007669"/>
    <property type="project" value="UniProtKB-UniRule"/>
</dbReference>
<dbReference type="GO" id="GO:0002099">
    <property type="term" value="P:tRNA wobble guanine modification"/>
    <property type="evidence" value="ECO:0007669"/>
    <property type="project" value="TreeGrafter"/>
</dbReference>
<dbReference type="FunFam" id="3.40.1780.10:FF:000001">
    <property type="entry name" value="S-adenosylmethionine:tRNA ribosyltransferase-isomerase"/>
    <property type="match status" value="1"/>
</dbReference>
<dbReference type="Gene3D" id="2.40.10.240">
    <property type="entry name" value="QueA-like"/>
    <property type="match status" value="1"/>
</dbReference>
<dbReference type="Gene3D" id="3.40.1780.10">
    <property type="entry name" value="QueA-like"/>
    <property type="match status" value="1"/>
</dbReference>
<dbReference type="HAMAP" id="MF_00113">
    <property type="entry name" value="QueA"/>
    <property type="match status" value="1"/>
</dbReference>
<dbReference type="InterPro" id="IPR003699">
    <property type="entry name" value="QueA"/>
</dbReference>
<dbReference type="InterPro" id="IPR042118">
    <property type="entry name" value="QueA_dom1"/>
</dbReference>
<dbReference type="InterPro" id="IPR042119">
    <property type="entry name" value="QueA_dom2"/>
</dbReference>
<dbReference type="InterPro" id="IPR036100">
    <property type="entry name" value="QueA_sf"/>
</dbReference>
<dbReference type="NCBIfam" id="NF001140">
    <property type="entry name" value="PRK00147.1"/>
    <property type="match status" value="1"/>
</dbReference>
<dbReference type="NCBIfam" id="TIGR00113">
    <property type="entry name" value="queA"/>
    <property type="match status" value="1"/>
</dbReference>
<dbReference type="PANTHER" id="PTHR30307">
    <property type="entry name" value="S-ADENOSYLMETHIONINE:TRNA RIBOSYLTRANSFERASE-ISOMERASE"/>
    <property type="match status" value="1"/>
</dbReference>
<dbReference type="PANTHER" id="PTHR30307:SF0">
    <property type="entry name" value="S-ADENOSYLMETHIONINE:TRNA RIBOSYLTRANSFERASE-ISOMERASE"/>
    <property type="match status" value="1"/>
</dbReference>
<dbReference type="Pfam" id="PF02547">
    <property type="entry name" value="Queuosine_synth"/>
    <property type="match status" value="1"/>
</dbReference>
<dbReference type="SUPFAM" id="SSF111337">
    <property type="entry name" value="QueA-like"/>
    <property type="match status" value="1"/>
</dbReference>
<organism>
    <name type="scientific">Paraburkholderia phymatum (strain DSM 17167 / CIP 108236 / LMG 21445 / STM815)</name>
    <name type="common">Burkholderia phymatum</name>
    <dbReference type="NCBI Taxonomy" id="391038"/>
    <lineage>
        <taxon>Bacteria</taxon>
        <taxon>Pseudomonadati</taxon>
        <taxon>Pseudomonadota</taxon>
        <taxon>Betaproteobacteria</taxon>
        <taxon>Burkholderiales</taxon>
        <taxon>Burkholderiaceae</taxon>
        <taxon>Paraburkholderia</taxon>
    </lineage>
</organism>
<comment type="function">
    <text evidence="1">Transfers and isomerizes the ribose moiety from AdoMet to the 7-aminomethyl group of 7-deazaguanine (preQ1-tRNA) to give epoxyqueuosine (oQ-tRNA).</text>
</comment>
<comment type="catalytic activity">
    <reaction evidence="1">
        <text>7-aminomethyl-7-carbaguanosine(34) in tRNA + S-adenosyl-L-methionine = epoxyqueuosine(34) in tRNA + adenine + L-methionine + 2 H(+)</text>
        <dbReference type="Rhea" id="RHEA:32155"/>
        <dbReference type="Rhea" id="RHEA-COMP:10342"/>
        <dbReference type="Rhea" id="RHEA-COMP:18582"/>
        <dbReference type="ChEBI" id="CHEBI:15378"/>
        <dbReference type="ChEBI" id="CHEBI:16708"/>
        <dbReference type="ChEBI" id="CHEBI:57844"/>
        <dbReference type="ChEBI" id="CHEBI:59789"/>
        <dbReference type="ChEBI" id="CHEBI:82833"/>
        <dbReference type="ChEBI" id="CHEBI:194443"/>
        <dbReference type="EC" id="2.4.99.17"/>
    </reaction>
</comment>
<comment type="pathway">
    <text evidence="1">tRNA modification; tRNA-queuosine biosynthesis.</text>
</comment>
<comment type="subunit">
    <text evidence="1">Monomer.</text>
</comment>
<comment type="subcellular location">
    <subcellularLocation>
        <location evidence="1">Cytoplasm</location>
    </subcellularLocation>
</comment>
<comment type="similarity">
    <text evidence="1">Belongs to the QueA family.</text>
</comment>
<sequence length="353" mass="38812">MFTLSDFDFDLPPELIAQTALPERSASRLLEVNGQTTPASFADRRFAELPECIQPGDLLVFNDTKVLKARFLGQKASGGKIEVLVERLTGERTALAQIRASKSPGPGTVLRLADAFDVTVGERVEPFYTLHFPDDCLTLIEQFGRLPLPPYIEHDPDAFDETRYQTVYAQNPGAVAAPTAGLHFDDSIFARLDAKGVERATLTLHVGAGTFQPVRVENIAEHKMHSEWYQLPQSLVDRIAATRARGNRVIAVGTTSMRALEAAARDADAAGKPLAATSAETDIFITPGYKFRVVDRLVTNFHLPKSTLLMLVSAFAGIETIRAAYRHAIDGRYRFFSYGDAMLLTRSEDALNA</sequence>
<reference key="1">
    <citation type="journal article" date="2014" name="Stand. Genomic Sci.">
        <title>Complete genome sequence of Burkholderia phymatum STM815(T), a broad host range and efficient nitrogen-fixing symbiont of Mimosa species.</title>
        <authorList>
            <person name="Moulin L."/>
            <person name="Klonowska A."/>
            <person name="Caroline B."/>
            <person name="Booth K."/>
            <person name="Vriezen J.A."/>
            <person name="Melkonian R."/>
            <person name="James E.K."/>
            <person name="Young J.P."/>
            <person name="Bena G."/>
            <person name="Hauser L."/>
            <person name="Land M."/>
            <person name="Kyrpides N."/>
            <person name="Bruce D."/>
            <person name="Chain P."/>
            <person name="Copeland A."/>
            <person name="Pitluck S."/>
            <person name="Woyke T."/>
            <person name="Lizotte-Waniewski M."/>
            <person name="Bristow J."/>
            <person name="Riley M."/>
        </authorList>
    </citation>
    <scope>NUCLEOTIDE SEQUENCE [LARGE SCALE GENOMIC DNA]</scope>
    <source>
        <strain>DSM 17167 / CIP 108236 / LMG 21445 / STM815</strain>
    </source>
</reference>
<evidence type="ECO:0000255" key="1">
    <source>
        <dbReference type="HAMAP-Rule" id="MF_00113"/>
    </source>
</evidence>
<accession>B2JGG8</accession>
<feature type="chain" id="PRO_1000094757" description="S-adenosylmethionine:tRNA ribosyltransferase-isomerase">
    <location>
        <begin position="1"/>
        <end position="353"/>
    </location>
</feature>
<protein>
    <recommendedName>
        <fullName evidence="1">S-adenosylmethionine:tRNA ribosyltransferase-isomerase</fullName>
        <ecNumber evidence="1">2.4.99.17</ecNumber>
    </recommendedName>
    <alternativeName>
        <fullName evidence="1">Queuosine biosynthesis protein QueA</fullName>
    </alternativeName>
</protein>